<comment type="function">
    <text evidence="1">Catalyzes the formation of S-adenosylmethionine from methionine and ATP.</text>
</comment>
<comment type="catalytic activity">
    <reaction evidence="1">
        <text>L-methionine + ATP + H2O = S-adenosyl-L-methionine + phosphate + diphosphate</text>
        <dbReference type="Rhea" id="RHEA:21080"/>
        <dbReference type="ChEBI" id="CHEBI:15377"/>
        <dbReference type="ChEBI" id="CHEBI:30616"/>
        <dbReference type="ChEBI" id="CHEBI:33019"/>
        <dbReference type="ChEBI" id="CHEBI:43474"/>
        <dbReference type="ChEBI" id="CHEBI:57844"/>
        <dbReference type="ChEBI" id="CHEBI:59789"/>
        <dbReference type="EC" id="2.5.1.6"/>
    </reaction>
</comment>
<comment type="cofactor">
    <cofactor evidence="1">
        <name>Mg(2+)</name>
        <dbReference type="ChEBI" id="CHEBI:18420"/>
    </cofactor>
</comment>
<comment type="pathway">
    <text evidence="1">Amino-acid biosynthesis; S-adenosyl-L-methionine biosynthesis; S-adenosyl-L-methionine from L-methionine: step 1/1.</text>
</comment>
<comment type="similarity">
    <text evidence="1">Belongs to the AdoMet synthase 2 family.</text>
</comment>
<gene>
    <name evidence="1" type="primary">mat</name>
    <name type="ordered locus">Pcal_2103</name>
</gene>
<proteinExistence type="inferred from homology"/>
<accession>A3MY01</accession>
<sequence length="402" mass="44404">MIVVEKVDKIPTAKRLVEIVERKGQGHPDYIADGISEWVSRYLSRYYLEHFGVILHHNVDKTLVVGGQAAPKFGGGEVIQPIYIIVSGRATSEVKTKDGTVKIPLGTIVIQAARDWLKSHFRFLDPDVHTIIDYRIGQGSADLVGIYDLGVRGVPLANDTSVGVGYAPLTPLEELVYKTERLLNSRDFKSKYPEVGEDVKVMGVRVGKEVKLTVACAMISRLVKDKSHYISVKEDVKRAIEDLAAKIMPDYNVEVTVNAADKPEYDIFYLTVTGTSAEHGDDGMTGRGNKANGLITPMRSMSLEAAAGKNPVSHVGKIYNVVAQRIADRIYKEVKDVVEVYVEVVSQIGKPINEPKILNVEILSSGELTGELRREAEAIAKEEMDRITQVTELILRGEVSLY</sequence>
<reference key="1">
    <citation type="submission" date="2007-02" db="EMBL/GenBank/DDBJ databases">
        <title>Complete sequence of Pyrobaculum calidifontis JCM 11548.</title>
        <authorList>
            <consortium name="US DOE Joint Genome Institute"/>
            <person name="Copeland A."/>
            <person name="Lucas S."/>
            <person name="Lapidus A."/>
            <person name="Barry K."/>
            <person name="Glavina del Rio T."/>
            <person name="Dalin E."/>
            <person name="Tice H."/>
            <person name="Pitluck S."/>
            <person name="Chain P."/>
            <person name="Malfatti S."/>
            <person name="Shin M."/>
            <person name="Vergez L."/>
            <person name="Schmutz J."/>
            <person name="Larimer F."/>
            <person name="Land M."/>
            <person name="Hauser L."/>
            <person name="Kyrpides N."/>
            <person name="Mikhailova N."/>
            <person name="Cozen A.E."/>
            <person name="Fitz-Gibbon S.T."/>
            <person name="House C.H."/>
            <person name="Saltikov C."/>
            <person name="Lowe T.M."/>
            <person name="Richardson P."/>
        </authorList>
    </citation>
    <scope>NUCLEOTIDE SEQUENCE [LARGE SCALE GENOMIC DNA]</scope>
    <source>
        <strain>DSM 21063 / JCM 11548 / VA1</strain>
    </source>
</reference>
<organism>
    <name type="scientific">Pyrobaculum calidifontis (strain DSM 21063 / JCM 11548 / VA1)</name>
    <dbReference type="NCBI Taxonomy" id="410359"/>
    <lineage>
        <taxon>Archaea</taxon>
        <taxon>Thermoproteota</taxon>
        <taxon>Thermoprotei</taxon>
        <taxon>Thermoproteales</taxon>
        <taxon>Thermoproteaceae</taxon>
        <taxon>Pyrobaculum</taxon>
    </lineage>
</organism>
<evidence type="ECO:0000255" key="1">
    <source>
        <dbReference type="HAMAP-Rule" id="MF_00136"/>
    </source>
</evidence>
<dbReference type="EC" id="2.5.1.6" evidence="1"/>
<dbReference type="EMBL" id="CP000561">
    <property type="protein sequence ID" value="ABO09518.1"/>
    <property type="molecule type" value="Genomic_DNA"/>
</dbReference>
<dbReference type="RefSeq" id="WP_011850776.1">
    <property type="nucleotide sequence ID" value="NC_009073.1"/>
</dbReference>
<dbReference type="SMR" id="A3MY01"/>
<dbReference type="STRING" id="410359.Pcal_2103"/>
<dbReference type="GeneID" id="4909824"/>
<dbReference type="KEGG" id="pcl:Pcal_2103"/>
<dbReference type="eggNOG" id="arCOG01678">
    <property type="taxonomic scope" value="Archaea"/>
</dbReference>
<dbReference type="HOGENOM" id="CLU_057642_0_0_2"/>
<dbReference type="OrthoDB" id="204488at2157"/>
<dbReference type="UniPathway" id="UPA00315">
    <property type="reaction ID" value="UER00080"/>
</dbReference>
<dbReference type="Proteomes" id="UP000001431">
    <property type="component" value="Chromosome"/>
</dbReference>
<dbReference type="GO" id="GO:0005524">
    <property type="term" value="F:ATP binding"/>
    <property type="evidence" value="ECO:0007669"/>
    <property type="project" value="UniProtKB-UniRule"/>
</dbReference>
<dbReference type="GO" id="GO:0000287">
    <property type="term" value="F:magnesium ion binding"/>
    <property type="evidence" value="ECO:0007669"/>
    <property type="project" value="UniProtKB-UniRule"/>
</dbReference>
<dbReference type="GO" id="GO:0004478">
    <property type="term" value="F:methionine adenosyltransferase activity"/>
    <property type="evidence" value="ECO:0007669"/>
    <property type="project" value="UniProtKB-UniRule"/>
</dbReference>
<dbReference type="GO" id="GO:0006730">
    <property type="term" value="P:one-carbon metabolic process"/>
    <property type="evidence" value="ECO:0007669"/>
    <property type="project" value="UniProtKB-KW"/>
</dbReference>
<dbReference type="GO" id="GO:0006556">
    <property type="term" value="P:S-adenosylmethionine biosynthetic process"/>
    <property type="evidence" value="ECO:0007669"/>
    <property type="project" value="UniProtKB-UniRule"/>
</dbReference>
<dbReference type="Gene3D" id="3.30.300.10">
    <property type="match status" value="1"/>
</dbReference>
<dbReference type="Gene3D" id="3.30.300.280">
    <property type="entry name" value="S-adenosylmethionine synthetase, C-terminal domain"/>
    <property type="match status" value="2"/>
</dbReference>
<dbReference type="HAMAP" id="MF_00136">
    <property type="entry name" value="S_AdoMet_synth2"/>
    <property type="match status" value="1"/>
</dbReference>
<dbReference type="InterPro" id="IPR027790">
    <property type="entry name" value="AdoMet_synthase_2_family"/>
</dbReference>
<dbReference type="InterPro" id="IPR042544">
    <property type="entry name" value="AdoMet_synthase_3"/>
</dbReference>
<dbReference type="InterPro" id="IPR002795">
    <property type="entry name" value="S-AdoMet_synthetase_arc"/>
</dbReference>
<dbReference type="NCBIfam" id="NF003365">
    <property type="entry name" value="PRK04439.1-4"/>
    <property type="match status" value="1"/>
</dbReference>
<dbReference type="NCBIfam" id="NF003366">
    <property type="entry name" value="PRK04439.1-5"/>
    <property type="match status" value="1"/>
</dbReference>
<dbReference type="PANTHER" id="PTHR36697">
    <property type="entry name" value="S-ADENOSYLMETHIONINE SYNTHASE"/>
    <property type="match status" value="1"/>
</dbReference>
<dbReference type="PANTHER" id="PTHR36697:SF1">
    <property type="entry name" value="S-ADENOSYLMETHIONINE SYNTHASE"/>
    <property type="match status" value="1"/>
</dbReference>
<dbReference type="Pfam" id="PF01941">
    <property type="entry name" value="AdoMet_Synthase"/>
    <property type="match status" value="1"/>
</dbReference>
<keyword id="KW-0067">ATP-binding</keyword>
<keyword id="KW-0460">Magnesium</keyword>
<keyword id="KW-0547">Nucleotide-binding</keyword>
<keyword id="KW-0554">One-carbon metabolism</keyword>
<keyword id="KW-0808">Transferase</keyword>
<feature type="chain" id="PRO_1000018657" description="S-adenosylmethionine synthase">
    <location>
        <begin position="1"/>
        <end position="402"/>
    </location>
</feature>
<feature type="binding site" evidence="1">
    <location>
        <begin position="137"/>
        <end position="142"/>
    </location>
    <ligand>
        <name>ATP</name>
        <dbReference type="ChEBI" id="CHEBI:30616"/>
    </ligand>
</feature>
<protein>
    <recommendedName>
        <fullName evidence="1">S-adenosylmethionine synthase</fullName>
        <shortName evidence="1">AdoMet synthase</shortName>
        <ecNumber evidence="1">2.5.1.6</ecNumber>
    </recommendedName>
    <alternativeName>
        <fullName evidence="1">Methionine adenosyltransferase</fullName>
    </alternativeName>
</protein>
<name>METK_PYRCJ</name>